<evidence type="ECO:0000256" key="1">
    <source>
        <dbReference type="SAM" id="MobiDB-lite"/>
    </source>
</evidence>
<evidence type="ECO:0000303" key="2">
    <source>
    </source>
</evidence>
<name>UP16_PSEMZ</name>
<protein>
    <recommendedName>
        <fullName>Unknown protein 16</fullName>
    </recommendedName>
</protein>
<feature type="chain" id="PRO_0000347303" description="Unknown protein 16">
    <location>
        <begin position="1" status="less than"/>
        <end position="26" status="greater than"/>
    </location>
</feature>
<feature type="region of interest" description="Disordered" evidence="1">
    <location>
        <begin position="1"/>
        <end position="26"/>
    </location>
</feature>
<feature type="non-consecutive residues" evidence="2">
    <location>
        <begin position="9"/>
        <end position="10"/>
    </location>
</feature>
<feature type="non-terminal residue" evidence="2">
    <location>
        <position position="1"/>
    </location>
</feature>
<feature type="non-terminal residue" evidence="2">
    <location>
        <position position="26"/>
    </location>
</feature>
<organism>
    <name type="scientific">Pseudotsuga menziesii</name>
    <name type="common">Douglas-fir</name>
    <name type="synonym">Abies menziesii</name>
    <dbReference type="NCBI Taxonomy" id="3357"/>
    <lineage>
        <taxon>Eukaryota</taxon>
        <taxon>Viridiplantae</taxon>
        <taxon>Streptophyta</taxon>
        <taxon>Embryophyta</taxon>
        <taxon>Tracheophyta</taxon>
        <taxon>Spermatophyta</taxon>
        <taxon>Pinopsida</taxon>
        <taxon>Pinidae</taxon>
        <taxon>Conifers I</taxon>
        <taxon>Pinales</taxon>
        <taxon>Pinaceae</taxon>
        <taxon>Pseudotsuga</taxon>
    </lineage>
</organism>
<sequence>AINSESGVRSVVPQPCNALPNQGPEK</sequence>
<accession>P85922</accession>
<reference key="1">
    <citation type="journal article" date="2008" name="J. Proteomics">
        <title>A proteomics approach to identify proteins differentially expressed in Douglas-fir seedlings infected by Phellinus sulphurascens.</title>
        <authorList>
            <person name="Islam M.A."/>
            <person name="Sturrock R.N."/>
            <person name="Ekramoddoullah A.K.M."/>
        </authorList>
    </citation>
    <scope>IDENTIFICATION BY MASS SPECTROMETRY</scope>
</reference>
<proteinExistence type="evidence at protein level"/>